<comment type="function">
    <text evidence="1">Catalyzes the isomerization of sedoheptulose 7-phosphate in D-glycero-D-manno-heptose 7-phosphate.</text>
</comment>
<comment type="catalytic activity">
    <reaction evidence="1">
        <text>2 D-sedoheptulose 7-phosphate = D-glycero-alpha-D-manno-heptose 7-phosphate + D-glycero-beta-D-manno-heptose 7-phosphate</text>
        <dbReference type="Rhea" id="RHEA:27489"/>
        <dbReference type="ChEBI" id="CHEBI:57483"/>
        <dbReference type="ChEBI" id="CHEBI:60203"/>
        <dbReference type="ChEBI" id="CHEBI:60204"/>
        <dbReference type="EC" id="5.3.1.28"/>
    </reaction>
</comment>
<comment type="cofactor">
    <cofactor evidence="1">
        <name>Zn(2+)</name>
        <dbReference type="ChEBI" id="CHEBI:29105"/>
    </cofactor>
    <text evidence="1">Binds 1 zinc ion per subunit.</text>
</comment>
<comment type="pathway">
    <text evidence="1">Carbohydrate biosynthesis; D-glycero-D-manno-heptose 7-phosphate biosynthesis; D-glycero-alpha-D-manno-heptose 7-phosphate and D-glycero-beta-D-manno-heptose 7-phosphate from sedoheptulose 7-phosphate: step 1/1.</text>
</comment>
<comment type="subunit">
    <text evidence="1">Homotetramer.</text>
</comment>
<comment type="subcellular location">
    <subcellularLocation>
        <location evidence="1">Cytoplasm</location>
    </subcellularLocation>
</comment>
<comment type="miscellaneous">
    <text evidence="1">The reaction produces a racemic mixture of D-glycero-alpha-D-manno-heptose 7-phosphate and D-glycero-beta-D-manno-heptose 7-phosphate.</text>
</comment>
<comment type="similarity">
    <text evidence="1">Belongs to the SIS family. GmhA subfamily.</text>
</comment>
<accession>Q8EK08</accession>
<protein>
    <recommendedName>
        <fullName evidence="1">Phosphoheptose isomerase</fullName>
        <ecNumber evidence="1">5.3.1.28</ecNumber>
    </recommendedName>
    <alternativeName>
        <fullName evidence="1">Sedoheptulose 7-phosphate isomerase</fullName>
    </alternativeName>
</protein>
<sequence>MLERIKDSFTESIQTKIDAAEALPESIAKAAEMMVQCLLGGNKILACGNGGSAGDAQHFSAELLNRYEIERPPLPAIALSTDTSTITAIANDYSYDEIFSKQILALGQPGDILLAISTSGNSGNVIKAMEAALSRDMTIVALTGKDGGAMAGLLSVGDVEIRVPSNVTARIQEVHLLVIHCLCDNIDRTLFPQDEQQ</sequence>
<keyword id="KW-0119">Carbohydrate metabolism</keyword>
<keyword id="KW-0963">Cytoplasm</keyword>
<keyword id="KW-0413">Isomerase</keyword>
<keyword id="KW-0479">Metal-binding</keyword>
<keyword id="KW-1185">Reference proteome</keyword>
<keyword id="KW-0862">Zinc</keyword>
<name>GMHA_SHEON</name>
<reference key="1">
    <citation type="journal article" date="2002" name="Nat. Biotechnol.">
        <title>Genome sequence of the dissimilatory metal ion-reducing bacterium Shewanella oneidensis.</title>
        <authorList>
            <person name="Heidelberg J.F."/>
            <person name="Paulsen I.T."/>
            <person name="Nelson K.E."/>
            <person name="Gaidos E.J."/>
            <person name="Nelson W.C."/>
            <person name="Read T.D."/>
            <person name="Eisen J.A."/>
            <person name="Seshadri R."/>
            <person name="Ward N.L."/>
            <person name="Methe B.A."/>
            <person name="Clayton R.A."/>
            <person name="Meyer T."/>
            <person name="Tsapin A."/>
            <person name="Scott J."/>
            <person name="Beanan M.J."/>
            <person name="Brinkac L.M."/>
            <person name="Daugherty S.C."/>
            <person name="DeBoy R.T."/>
            <person name="Dodson R.J."/>
            <person name="Durkin A.S."/>
            <person name="Haft D.H."/>
            <person name="Kolonay J.F."/>
            <person name="Madupu R."/>
            <person name="Peterson J.D."/>
            <person name="Umayam L.A."/>
            <person name="White O."/>
            <person name="Wolf A.M."/>
            <person name="Vamathevan J.J."/>
            <person name="Weidman J.F."/>
            <person name="Impraim M."/>
            <person name="Lee K."/>
            <person name="Berry K.J."/>
            <person name="Lee C."/>
            <person name="Mueller J."/>
            <person name="Khouri H.M."/>
            <person name="Gill J."/>
            <person name="Utterback T.R."/>
            <person name="McDonald L.A."/>
            <person name="Feldblyum T.V."/>
            <person name="Smith H.O."/>
            <person name="Venter J.C."/>
            <person name="Nealson K.H."/>
            <person name="Fraser C.M."/>
        </authorList>
    </citation>
    <scope>NUCLEOTIDE SEQUENCE [LARGE SCALE GENOMIC DNA]</scope>
    <source>
        <strain>ATCC 700550 / JCM 31522 / CIP 106686 / LMG 19005 / NCIMB 14063 / MR-1</strain>
    </source>
</reference>
<proteinExistence type="inferred from homology"/>
<feature type="chain" id="PRO_1000197021" description="Phosphoheptose isomerase">
    <location>
        <begin position="1"/>
        <end position="197"/>
    </location>
</feature>
<feature type="domain" description="SIS" evidence="1">
    <location>
        <begin position="34"/>
        <end position="196"/>
    </location>
</feature>
<feature type="binding site" evidence="1">
    <location>
        <begin position="49"/>
        <end position="51"/>
    </location>
    <ligand>
        <name>substrate</name>
    </ligand>
</feature>
<feature type="binding site" evidence="1">
    <location>
        <position position="58"/>
    </location>
    <ligand>
        <name>Zn(2+)</name>
        <dbReference type="ChEBI" id="CHEBI:29105"/>
    </ligand>
</feature>
<feature type="binding site" evidence="1">
    <location>
        <position position="62"/>
    </location>
    <ligand>
        <name>substrate</name>
    </ligand>
</feature>
<feature type="binding site" evidence="1">
    <location>
        <position position="62"/>
    </location>
    <ligand>
        <name>Zn(2+)</name>
        <dbReference type="ChEBI" id="CHEBI:29105"/>
    </ligand>
</feature>
<feature type="binding site" evidence="1">
    <location>
        <begin position="91"/>
        <end position="92"/>
    </location>
    <ligand>
        <name>substrate</name>
    </ligand>
</feature>
<feature type="binding site" evidence="1">
    <location>
        <begin position="117"/>
        <end position="119"/>
    </location>
    <ligand>
        <name>substrate</name>
    </ligand>
</feature>
<feature type="binding site" evidence="1">
    <location>
        <position position="122"/>
    </location>
    <ligand>
        <name>substrate</name>
    </ligand>
</feature>
<feature type="binding site" evidence="1">
    <location>
        <position position="172"/>
    </location>
    <ligand>
        <name>substrate</name>
    </ligand>
</feature>
<feature type="binding site" evidence="1">
    <location>
        <position position="172"/>
    </location>
    <ligand>
        <name>Zn(2+)</name>
        <dbReference type="ChEBI" id="CHEBI:29105"/>
    </ligand>
</feature>
<feature type="binding site" evidence="1">
    <location>
        <position position="180"/>
    </location>
    <ligand>
        <name>Zn(2+)</name>
        <dbReference type="ChEBI" id="CHEBI:29105"/>
    </ligand>
</feature>
<dbReference type="EC" id="5.3.1.28" evidence="1"/>
<dbReference type="EMBL" id="AE014299">
    <property type="protein sequence ID" value="AAN53383.1"/>
    <property type="molecule type" value="Genomic_DNA"/>
</dbReference>
<dbReference type="RefSeq" id="NP_715938.1">
    <property type="nucleotide sequence ID" value="NC_004347.2"/>
</dbReference>
<dbReference type="RefSeq" id="WP_011070670.1">
    <property type="nucleotide sequence ID" value="NZ_CP053946.1"/>
</dbReference>
<dbReference type="SMR" id="Q8EK08"/>
<dbReference type="STRING" id="211586.SO_0298"/>
<dbReference type="PaxDb" id="211586-SO_0298"/>
<dbReference type="KEGG" id="son:SO_0298"/>
<dbReference type="PATRIC" id="fig|211586.12.peg.290"/>
<dbReference type="eggNOG" id="COG0279">
    <property type="taxonomic scope" value="Bacteria"/>
</dbReference>
<dbReference type="HOGENOM" id="CLU_080999_4_0_6"/>
<dbReference type="OrthoDB" id="9810929at2"/>
<dbReference type="PhylomeDB" id="Q8EK08"/>
<dbReference type="BioCyc" id="SONE211586:G1GMP-288-MONOMER"/>
<dbReference type="UniPathway" id="UPA00041">
    <property type="reaction ID" value="UER00436"/>
</dbReference>
<dbReference type="Proteomes" id="UP000008186">
    <property type="component" value="Chromosome"/>
</dbReference>
<dbReference type="GO" id="GO:0005737">
    <property type="term" value="C:cytoplasm"/>
    <property type="evidence" value="ECO:0007669"/>
    <property type="project" value="UniProtKB-SubCell"/>
</dbReference>
<dbReference type="GO" id="GO:1990102">
    <property type="term" value="C:DnaA-DiaA complex"/>
    <property type="evidence" value="ECO:0000318"/>
    <property type="project" value="GO_Central"/>
</dbReference>
<dbReference type="GO" id="GO:0097367">
    <property type="term" value="F:carbohydrate derivative binding"/>
    <property type="evidence" value="ECO:0007669"/>
    <property type="project" value="InterPro"/>
</dbReference>
<dbReference type="GO" id="GO:0008968">
    <property type="term" value="F:D-sedoheptulose 7-phosphate isomerase activity"/>
    <property type="evidence" value="ECO:0007669"/>
    <property type="project" value="UniProtKB-UniRule"/>
</dbReference>
<dbReference type="GO" id="GO:0008270">
    <property type="term" value="F:zinc ion binding"/>
    <property type="evidence" value="ECO:0007669"/>
    <property type="project" value="UniProtKB-UniRule"/>
</dbReference>
<dbReference type="GO" id="GO:0005975">
    <property type="term" value="P:carbohydrate metabolic process"/>
    <property type="evidence" value="ECO:0007669"/>
    <property type="project" value="UniProtKB-UniRule"/>
</dbReference>
<dbReference type="GO" id="GO:2001061">
    <property type="term" value="P:D-glycero-D-manno-heptose 7-phosphate biosynthetic process"/>
    <property type="evidence" value="ECO:0007669"/>
    <property type="project" value="UniProtKB-UniPathway"/>
</dbReference>
<dbReference type="GO" id="GO:0032298">
    <property type="term" value="P:positive regulation of DNA-templated DNA replication initiation"/>
    <property type="evidence" value="ECO:0000318"/>
    <property type="project" value="GO_Central"/>
</dbReference>
<dbReference type="CDD" id="cd05006">
    <property type="entry name" value="SIS_GmhA"/>
    <property type="match status" value="1"/>
</dbReference>
<dbReference type="Gene3D" id="3.40.50.10490">
    <property type="entry name" value="Glucose-6-phosphate isomerase like protein, domain 1"/>
    <property type="match status" value="1"/>
</dbReference>
<dbReference type="HAMAP" id="MF_00067">
    <property type="entry name" value="GmhA"/>
    <property type="match status" value="1"/>
</dbReference>
<dbReference type="InterPro" id="IPR035461">
    <property type="entry name" value="GmhA/DiaA"/>
</dbReference>
<dbReference type="InterPro" id="IPR004515">
    <property type="entry name" value="Phosphoheptose_Isoase"/>
</dbReference>
<dbReference type="InterPro" id="IPR001347">
    <property type="entry name" value="SIS_dom"/>
</dbReference>
<dbReference type="InterPro" id="IPR046348">
    <property type="entry name" value="SIS_dom_sf"/>
</dbReference>
<dbReference type="InterPro" id="IPR050099">
    <property type="entry name" value="SIS_GmhA/DiaA_subfam"/>
</dbReference>
<dbReference type="NCBIfam" id="NF010546">
    <property type="entry name" value="PRK13936.1"/>
    <property type="match status" value="1"/>
</dbReference>
<dbReference type="PANTHER" id="PTHR30390:SF6">
    <property type="entry name" value="DNAA INITIATOR-ASSOCIATING PROTEIN DIAA"/>
    <property type="match status" value="1"/>
</dbReference>
<dbReference type="PANTHER" id="PTHR30390">
    <property type="entry name" value="SEDOHEPTULOSE 7-PHOSPHATE ISOMERASE / DNAA INITIATOR-ASSOCIATING FACTOR FOR REPLICATION INITIATION"/>
    <property type="match status" value="1"/>
</dbReference>
<dbReference type="Pfam" id="PF13580">
    <property type="entry name" value="SIS_2"/>
    <property type="match status" value="1"/>
</dbReference>
<dbReference type="SUPFAM" id="SSF53697">
    <property type="entry name" value="SIS domain"/>
    <property type="match status" value="1"/>
</dbReference>
<dbReference type="PROSITE" id="PS51464">
    <property type="entry name" value="SIS"/>
    <property type="match status" value="1"/>
</dbReference>
<gene>
    <name evidence="1" type="primary">gmhA</name>
    <name type="ordered locus">SO_0298</name>
</gene>
<evidence type="ECO:0000255" key="1">
    <source>
        <dbReference type="HAMAP-Rule" id="MF_00067"/>
    </source>
</evidence>
<organism>
    <name type="scientific">Shewanella oneidensis (strain ATCC 700550 / JCM 31522 / CIP 106686 / LMG 19005 / NCIMB 14063 / MR-1)</name>
    <dbReference type="NCBI Taxonomy" id="211586"/>
    <lineage>
        <taxon>Bacteria</taxon>
        <taxon>Pseudomonadati</taxon>
        <taxon>Pseudomonadota</taxon>
        <taxon>Gammaproteobacteria</taxon>
        <taxon>Alteromonadales</taxon>
        <taxon>Shewanellaceae</taxon>
        <taxon>Shewanella</taxon>
    </lineage>
</organism>